<reference key="1">
    <citation type="journal article" date="2006" name="PLoS Genet.">
        <title>The complete genome sequence and comparative genome analysis of the high pathogenicity Yersinia enterocolitica strain 8081.</title>
        <authorList>
            <person name="Thomson N.R."/>
            <person name="Howard S."/>
            <person name="Wren B.W."/>
            <person name="Holden M.T.G."/>
            <person name="Crossman L."/>
            <person name="Challis G.L."/>
            <person name="Churcher C."/>
            <person name="Mungall K."/>
            <person name="Brooks K."/>
            <person name="Chillingworth T."/>
            <person name="Feltwell T."/>
            <person name="Abdellah Z."/>
            <person name="Hauser H."/>
            <person name="Jagels K."/>
            <person name="Maddison M."/>
            <person name="Moule S."/>
            <person name="Sanders M."/>
            <person name="Whitehead S."/>
            <person name="Quail M.A."/>
            <person name="Dougan G."/>
            <person name="Parkhill J."/>
            <person name="Prentice M.B."/>
        </authorList>
    </citation>
    <scope>NUCLEOTIDE SEQUENCE [LARGE SCALE GENOMIC DNA]</scope>
    <source>
        <strain>NCTC 13174 / 8081</strain>
    </source>
</reference>
<evidence type="ECO:0000255" key="1">
    <source>
        <dbReference type="HAMAP-Rule" id="MF_01693"/>
    </source>
</evidence>
<proteinExistence type="inferred from homology"/>
<name>BIOF_YERE8</name>
<keyword id="KW-0093">Biotin biosynthesis</keyword>
<keyword id="KW-0663">Pyridoxal phosphate</keyword>
<keyword id="KW-0808">Transferase</keyword>
<protein>
    <recommendedName>
        <fullName evidence="1">8-amino-7-oxononanoate synthase</fullName>
        <shortName evidence="1">AONS</shortName>
        <ecNumber evidence="1">2.3.1.47</ecNumber>
    </recommendedName>
    <alternativeName>
        <fullName evidence="1">7-keto-8-amino-pelargonic acid synthase</fullName>
        <shortName evidence="1">7-KAP synthase</shortName>
        <shortName evidence="1">KAPA synthase</shortName>
    </alternativeName>
    <alternativeName>
        <fullName evidence="1">8-amino-7-ketopelargonate synthase</fullName>
    </alternativeName>
</protein>
<feature type="chain" id="PRO_0000381152" description="8-amino-7-oxononanoate synthase">
    <location>
        <begin position="1"/>
        <end position="383"/>
    </location>
</feature>
<feature type="binding site" evidence="1">
    <location>
        <position position="21"/>
    </location>
    <ligand>
        <name>substrate</name>
    </ligand>
</feature>
<feature type="binding site" evidence="1">
    <location>
        <begin position="108"/>
        <end position="109"/>
    </location>
    <ligand>
        <name>pyridoxal 5'-phosphate</name>
        <dbReference type="ChEBI" id="CHEBI:597326"/>
    </ligand>
</feature>
<feature type="binding site" evidence="1">
    <location>
        <position position="133"/>
    </location>
    <ligand>
        <name>substrate</name>
    </ligand>
</feature>
<feature type="binding site" evidence="1">
    <location>
        <position position="179"/>
    </location>
    <ligand>
        <name>pyridoxal 5'-phosphate</name>
        <dbReference type="ChEBI" id="CHEBI:597326"/>
    </ligand>
</feature>
<feature type="binding site" evidence="1">
    <location>
        <position position="207"/>
    </location>
    <ligand>
        <name>pyridoxal 5'-phosphate</name>
        <dbReference type="ChEBI" id="CHEBI:597326"/>
    </ligand>
</feature>
<feature type="binding site" evidence="1">
    <location>
        <position position="233"/>
    </location>
    <ligand>
        <name>pyridoxal 5'-phosphate</name>
        <dbReference type="ChEBI" id="CHEBI:597326"/>
    </ligand>
</feature>
<feature type="binding site" evidence="1">
    <location>
        <position position="350"/>
    </location>
    <ligand>
        <name>substrate</name>
    </ligand>
</feature>
<feature type="modified residue" description="N6-(pyridoxal phosphate)lysine" evidence="1">
    <location>
        <position position="236"/>
    </location>
</feature>
<sequence length="383" mass="40909">MSWQNKIDLGLQQRHEAAAYRCRQVNDGANGRWLQTGAQQYLNFSSNDYLGLSQDAAVIAAWQQGAQRYGVGSGGSGHVTGYSLPHAQLEQQLADWLGYPRALLFISGFAANQAVLTALTAADDRILADKLSHASLLEAATHSPAQLRRFAHNQPDSLQKLLNKPCSGQTLVVTEGVFSMDGDSAPLAAIQQHTAAAGGWLLVDDAHGLGVRGAAGRGSCELQGVKPELLVVTFSKAFGLSGAAVLCQEPVAEYLLQYARHLIYSTAMPPAQACALQAALLRIQQGDDLRQRLQQRITQFRCGAAALPLQLGASETAIQPLLVGDNQQTVALAEQLRAAGLWVTAIRPPTVPPGGARLRITLSAAHESEDIDRLLEVLHGVCH</sequence>
<accession>A1JS67</accession>
<gene>
    <name evidence="1" type="primary">bioF</name>
    <name type="ordered locus">YE2906</name>
</gene>
<comment type="function">
    <text evidence="1">Catalyzes the decarboxylative condensation of pimeloyl-[acyl-carrier protein] and L-alanine to produce 8-amino-7-oxononanoate (AON), [acyl-carrier protein], and carbon dioxide.</text>
</comment>
<comment type="catalytic activity">
    <reaction evidence="1">
        <text>6-carboxyhexanoyl-[ACP] + L-alanine + H(+) = (8S)-8-amino-7-oxononanoate + holo-[ACP] + CO2</text>
        <dbReference type="Rhea" id="RHEA:42288"/>
        <dbReference type="Rhea" id="RHEA-COMP:9685"/>
        <dbReference type="Rhea" id="RHEA-COMP:9955"/>
        <dbReference type="ChEBI" id="CHEBI:15378"/>
        <dbReference type="ChEBI" id="CHEBI:16526"/>
        <dbReference type="ChEBI" id="CHEBI:57972"/>
        <dbReference type="ChEBI" id="CHEBI:64479"/>
        <dbReference type="ChEBI" id="CHEBI:78846"/>
        <dbReference type="ChEBI" id="CHEBI:149468"/>
        <dbReference type="EC" id="2.3.1.47"/>
    </reaction>
</comment>
<comment type="cofactor">
    <cofactor evidence="1">
        <name>pyridoxal 5'-phosphate</name>
        <dbReference type="ChEBI" id="CHEBI:597326"/>
    </cofactor>
</comment>
<comment type="pathway">
    <text evidence="1">Cofactor biosynthesis; biotin biosynthesis.</text>
</comment>
<comment type="subunit">
    <text evidence="1">Homodimer.</text>
</comment>
<comment type="similarity">
    <text evidence="1">Belongs to the class-II pyridoxal-phosphate-dependent aminotransferase family. BioF subfamily.</text>
</comment>
<dbReference type="EC" id="2.3.1.47" evidence="1"/>
<dbReference type="EMBL" id="AM286415">
    <property type="protein sequence ID" value="CAL12944.1"/>
    <property type="molecule type" value="Genomic_DNA"/>
</dbReference>
<dbReference type="RefSeq" id="WP_005168073.1">
    <property type="nucleotide sequence ID" value="NC_008800.1"/>
</dbReference>
<dbReference type="RefSeq" id="YP_001007094.1">
    <property type="nucleotide sequence ID" value="NC_008800.1"/>
</dbReference>
<dbReference type="SMR" id="A1JS67"/>
<dbReference type="KEGG" id="yen:YE2906"/>
<dbReference type="PATRIC" id="fig|393305.7.peg.3090"/>
<dbReference type="eggNOG" id="COG0156">
    <property type="taxonomic scope" value="Bacteria"/>
</dbReference>
<dbReference type="HOGENOM" id="CLU_015846_11_2_6"/>
<dbReference type="OrthoDB" id="9807157at2"/>
<dbReference type="UniPathway" id="UPA00078"/>
<dbReference type="Proteomes" id="UP000000642">
    <property type="component" value="Chromosome"/>
</dbReference>
<dbReference type="GO" id="GO:0008710">
    <property type="term" value="F:8-amino-7-oxononanoate synthase activity"/>
    <property type="evidence" value="ECO:0007669"/>
    <property type="project" value="UniProtKB-UniRule"/>
</dbReference>
<dbReference type="GO" id="GO:0030170">
    <property type="term" value="F:pyridoxal phosphate binding"/>
    <property type="evidence" value="ECO:0007669"/>
    <property type="project" value="UniProtKB-UniRule"/>
</dbReference>
<dbReference type="GO" id="GO:0009102">
    <property type="term" value="P:biotin biosynthetic process"/>
    <property type="evidence" value="ECO:0007669"/>
    <property type="project" value="UniProtKB-UniRule"/>
</dbReference>
<dbReference type="Gene3D" id="3.90.1150.10">
    <property type="entry name" value="Aspartate Aminotransferase, domain 1"/>
    <property type="match status" value="1"/>
</dbReference>
<dbReference type="Gene3D" id="3.40.640.10">
    <property type="entry name" value="Type I PLP-dependent aspartate aminotransferase-like (Major domain)"/>
    <property type="match status" value="1"/>
</dbReference>
<dbReference type="HAMAP" id="MF_01693">
    <property type="entry name" value="BioF_aminotrans_2"/>
    <property type="match status" value="1"/>
</dbReference>
<dbReference type="InterPro" id="IPR001917">
    <property type="entry name" value="Aminotrans_II_pyridoxalP_BS"/>
</dbReference>
<dbReference type="InterPro" id="IPR004839">
    <property type="entry name" value="Aminotransferase_I/II_large"/>
</dbReference>
<dbReference type="InterPro" id="IPR050087">
    <property type="entry name" value="AON_synthase_class-II"/>
</dbReference>
<dbReference type="InterPro" id="IPR004723">
    <property type="entry name" value="AONS_Archaea/Proteobacteria"/>
</dbReference>
<dbReference type="InterPro" id="IPR022834">
    <property type="entry name" value="AONS_Proteobacteria"/>
</dbReference>
<dbReference type="InterPro" id="IPR015424">
    <property type="entry name" value="PyrdxlP-dep_Trfase"/>
</dbReference>
<dbReference type="InterPro" id="IPR015421">
    <property type="entry name" value="PyrdxlP-dep_Trfase_major"/>
</dbReference>
<dbReference type="InterPro" id="IPR015422">
    <property type="entry name" value="PyrdxlP-dep_Trfase_small"/>
</dbReference>
<dbReference type="NCBIfam" id="TIGR00858">
    <property type="entry name" value="bioF"/>
    <property type="match status" value="1"/>
</dbReference>
<dbReference type="PANTHER" id="PTHR13693:SF100">
    <property type="entry name" value="8-AMINO-7-OXONONANOATE SYNTHASE"/>
    <property type="match status" value="1"/>
</dbReference>
<dbReference type="PANTHER" id="PTHR13693">
    <property type="entry name" value="CLASS II AMINOTRANSFERASE/8-AMINO-7-OXONONANOATE SYNTHASE"/>
    <property type="match status" value="1"/>
</dbReference>
<dbReference type="Pfam" id="PF00155">
    <property type="entry name" value="Aminotran_1_2"/>
    <property type="match status" value="1"/>
</dbReference>
<dbReference type="SUPFAM" id="SSF53383">
    <property type="entry name" value="PLP-dependent transferases"/>
    <property type="match status" value="1"/>
</dbReference>
<dbReference type="PROSITE" id="PS00599">
    <property type="entry name" value="AA_TRANSFER_CLASS_2"/>
    <property type="match status" value="1"/>
</dbReference>
<organism>
    <name type="scientific">Yersinia enterocolitica serotype O:8 / biotype 1B (strain NCTC 13174 / 8081)</name>
    <dbReference type="NCBI Taxonomy" id="393305"/>
    <lineage>
        <taxon>Bacteria</taxon>
        <taxon>Pseudomonadati</taxon>
        <taxon>Pseudomonadota</taxon>
        <taxon>Gammaproteobacteria</taxon>
        <taxon>Enterobacterales</taxon>
        <taxon>Yersiniaceae</taxon>
        <taxon>Yersinia</taxon>
    </lineage>
</organism>